<keyword id="KW-1003">Cell membrane</keyword>
<keyword id="KW-0285">Flavoprotein</keyword>
<keyword id="KW-0288">FMN</keyword>
<keyword id="KW-0472">Membrane</keyword>
<keyword id="KW-0560">Oxidoreductase</keyword>
<keyword id="KW-0665">Pyrimidine biosynthesis</keyword>
<sequence length="335" mass="35841">MYPLARRILFALDAEKAHHFTLDALYTVYKLGLIPVTDNRTKPVKLMGMDLPNPVGLAAGLDKNGEYIDALGALGFGFIEIGTVTPKPQPGNPQPRLFRVPEHQGIINRMGFNNHGIDTMIRNIEKSKFSGVLGINIGKNAVTPIENAADDYLICLEKAYAHASYITVNISSPNTKNLRALQGGDELSALLEALKNKQAQLASVYGKYVPLAVKIAPDLDEAQIEDIAHVVKSVEMDGIIATNTTIDKSSLGSHPLAGEQGGLSGLPVHEKSNRVLKLLADHIDGKLPIIGVGGIMEGGDAADKIRLGATAVQVYSGLIYKGPALVKECLKALAR</sequence>
<proteinExistence type="inferred from homology"/>
<feature type="chain" id="PRO_0000148459" description="Dihydroorotate dehydrogenase (quinone)">
    <location>
        <begin position="1"/>
        <end position="335"/>
    </location>
</feature>
<feature type="active site" description="Nucleophile" evidence="1">
    <location>
        <position position="172"/>
    </location>
</feature>
<feature type="binding site" evidence="1">
    <location>
        <begin position="59"/>
        <end position="63"/>
    </location>
    <ligand>
        <name>FMN</name>
        <dbReference type="ChEBI" id="CHEBI:58210"/>
    </ligand>
</feature>
<feature type="binding site" evidence="1">
    <location>
        <position position="63"/>
    </location>
    <ligand>
        <name>substrate</name>
    </ligand>
</feature>
<feature type="binding site" evidence="1">
    <location>
        <position position="83"/>
    </location>
    <ligand>
        <name>FMN</name>
        <dbReference type="ChEBI" id="CHEBI:58210"/>
    </ligand>
</feature>
<feature type="binding site" evidence="1">
    <location>
        <begin position="108"/>
        <end position="112"/>
    </location>
    <ligand>
        <name>substrate</name>
    </ligand>
</feature>
<feature type="binding site" evidence="1">
    <location>
        <position position="136"/>
    </location>
    <ligand>
        <name>FMN</name>
        <dbReference type="ChEBI" id="CHEBI:58210"/>
    </ligand>
</feature>
<feature type="binding site" evidence="1">
    <location>
        <position position="169"/>
    </location>
    <ligand>
        <name>FMN</name>
        <dbReference type="ChEBI" id="CHEBI:58210"/>
    </ligand>
</feature>
<feature type="binding site" evidence="1">
    <location>
        <position position="169"/>
    </location>
    <ligand>
        <name>substrate</name>
    </ligand>
</feature>
<feature type="binding site" evidence="1">
    <location>
        <position position="174"/>
    </location>
    <ligand>
        <name>substrate</name>
    </ligand>
</feature>
<feature type="binding site" evidence="1">
    <location>
        <position position="214"/>
    </location>
    <ligand>
        <name>FMN</name>
        <dbReference type="ChEBI" id="CHEBI:58210"/>
    </ligand>
</feature>
<feature type="binding site" evidence="1">
    <location>
        <position position="242"/>
    </location>
    <ligand>
        <name>FMN</name>
        <dbReference type="ChEBI" id="CHEBI:58210"/>
    </ligand>
</feature>
<feature type="binding site" evidence="1">
    <location>
        <begin position="243"/>
        <end position="244"/>
    </location>
    <ligand>
        <name>substrate</name>
    </ligand>
</feature>
<feature type="binding site" evidence="1">
    <location>
        <position position="265"/>
    </location>
    <ligand>
        <name>FMN</name>
        <dbReference type="ChEBI" id="CHEBI:58210"/>
    </ligand>
</feature>
<feature type="binding site" evidence="1">
    <location>
        <position position="294"/>
    </location>
    <ligand>
        <name>FMN</name>
        <dbReference type="ChEBI" id="CHEBI:58210"/>
    </ligand>
</feature>
<feature type="binding site" evidence="1">
    <location>
        <begin position="315"/>
        <end position="316"/>
    </location>
    <ligand>
        <name>FMN</name>
        <dbReference type="ChEBI" id="CHEBI:58210"/>
    </ligand>
</feature>
<gene>
    <name evidence="1" type="primary">pyrD</name>
    <name type="ordered locus">NMA0042</name>
</gene>
<comment type="function">
    <text evidence="1">Catalyzes the conversion of dihydroorotate to orotate with quinone as electron acceptor.</text>
</comment>
<comment type="catalytic activity">
    <reaction evidence="1">
        <text>(S)-dihydroorotate + a quinone = orotate + a quinol</text>
        <dbReference type="Rhea" id="RHEA:30187"/>
        <dbReference type="ChEBI" id="CHEBI:24646"/>
        <dbReference type="ChEBI" id="CHEBI:30839"/>
        <dbReference type="ChEBI" id="CHEBI:30864"/>
        <dbReference type="ChEBI" id="CHEBI:132124"/>
        <dbReference type="EC" id="1.3.5.2"/>
    </reaction>
</comment>
<comment type="cofactor">
    <cofactor evidence="1">
        <name>FMN</name>
        <dbReference type="ChEBI" id="CHEBI:58210"/>
    </cofactor>
    <text evidence="1">Binds 1 FMN per subunit.</text>
</comment>
<comment type="pathway">
    <text evidence="1">Pyrimidine metabolism; UMP biosynthesis via de novo pathway; orotate from (S)-dihydroorotate (quinone route): step 1/1.</text>
</comment>
<comment type="subunit">
    <text evidence="1">Monomer.</text>
</comment>
<comment type="subcellular location">
    <subcellularLocation>
        <location evidence="1">Cell membrane</location>
        <topology evidence="1">Peripheral membrane protein</topology>
    </subcellularLocation>
</comment>
<comment type="similarity">
    <text evidence="1">Belongs to the dihydroorotate dehydrogenase family. Type 2 subfamily.</text>
</comment>
<reference key="1">
    <citation type="journal article" date="2000" name="Nature">
        <title>Complete DNA sequence of a serogroup A strain of Neisseria meningitidis Z2491.</title>
        <authorList>
            <person name="Parkhill J."/>
            <person name="Achtman M."/>
            <person name="James K.D."/>
            <person name="Bentley S.D."/>
            <person name="Churcher C.M."/>
            <person name="Klee S.R."/>
            <person name="Morelli G."/>
            <person name="Basham D."/>
            <person name="Brown D."/>
            <person name="Chillingworth T."/>
            <person name="Davies R.M."/>
            <person name="Davis P."/>
            <person name="Devlin K."/>
            <person name="Feltwell T."/>
            <person name="Hamlin N."/>
            <person name="Holroyd S."/>
            <person name="Jagels K."/>
            <person name="Leather S."/>
            <person name="Moule S."/>
            <person name="Mungall K.L."/>
            <person name="Quail M.A."/>
            <person name="Rajandream M.A."/>
            <person name="Rutherford K.M."/>
            <person name="Simmonds M."/>
            <person name="Skelton J."/>
            <person name="Whitehead S."/>
            <person name="Spratt B.G."/>
            <person name="Barrell B.G."/>
        </authorList>
    </citation>
    <scope>NUCLEOTIDE SEQUENCE [LARGE SCALE GENOMIC DNA]</scope>
    <source>
        <strain>DSM 15465 / Z2491</strain>
    </source>
</reference>
<name>PYRD_NEIMA</name>
<protein>
    <recommendedName>
        <fullName evidence="1">Dihydroorotate dehydrogenase (quinone)</fullName>
        <ecNumber evidence="1">1.3.5.2</ecNumber>
    </recommendedName>
    <alternativeName>
        <fullName evidence="1">DHOdehase</fullName>
        <shortName evidence="1">DHOD</shortName>
        <shortName evidence="1">DHODase</shortName>
    </alternativeName>
    <alternativeName>
        <fullName evidence="1">Dihydroorotate oxidase</fullName>
    </alternativeName>
</protein>
<organism>
    <name type="scientific">Neisseria meningitidis serogroup A / serotype 4A (strain DSM 15465 / Z2491)</name>
    <dbReference type="NCBI Taxonomy" id="122587"/>
    <lineage>
        <taxon>Bacteria</taxon>
        <taxon>Pseudomonadati</taxon>
        <taxon>Pseudomonadota</taxon>
        <taxon>Betaproteobacteria</taxon>
        <taxon>Neisseriales</taxon>
        <taxon>Neisseriaceae</taxon>
        <taxon>Neisseria</taxon>
    </lineage>
</organism>
<dbReference type="EC" id="1.3.5.2" evidence="1"/>
<dbReference type="EMBL" id="AL157959">
    <property type="protein sequence ID" value="CAM07366.1"/>
    <property type="molecule type" value="Genomic_DNA"/>
</dbReference>
<dbReference type="PIR" id="D81995">
    <property type="entry name" value="D81995"/>
</dbReference>
<dbReference type="RefSeq" id="WP_002245818.1">
    <property type="nucleotide sequence ID" value="NC_003116.1"/>
</dbReference>
<dbReference type="SMR" id="Q9JX66"/>
<dbReference type="EnsemblBacteria" id="CAM07366">
    <property type="protein sequence ID" value="CAM07366"/>
    <property type="gene ID" value="NMA0042"/>
</dbReference>
<dbReference type="KEGG" id="nma:NMA0042"/>
<dbReference type="HOGENOM" id="CLU_013640_2_0_4"/>
<dbReference type="UniPathway" id="UPA00070">
    <property type="reaction ID" value="UER00946"/>
</dbReference>
<dbReference type="Proteomes" id="UP000000626">
    <property type="component" value="Chromosome"/>
</dbReference>
<dbReference type="GO" id="GO:0005737">
    <property type="term" value="C:cytoplasm"/>
    <property type="evidence" value="ECO:0007669"/>
    <property type="project" value="InterPro"/>
</dbReference>
<dbReference type="GO" id="GO:0005886">
    <property type="term" value="C:plasma membrane"/>
    <property type="evidence" value="ECO:0007669"/>
    <property type="project" value="UniProtKB-SubCell"/>
</dbReference>
<dbReference type="GO" id="GO:0106430">
    <property type="term" value="F:dihydroorotate dehydrogenase (quinone) activity"/>
    <property type="evidence" value="ECO:0007669"/>
    <property type="project" value="UniProtKB-EC"/>
</dbReference>
<dbReference type="GO" id="GO:0006207">
    <property type="term" value="P:'de novo' pyrimidine nucleobase biosynthetic process"/>
    <property type="evidence" value="ECO:0007669"/>
    <property type="project" value="InterPro"/>
</dbReference>
<dbReference type="GO" id="GO:0044205">
    <property type="term" value="P:'de novo' UMP biosynthetic process"/>
    <property type="evidence" value="ECO:0007669"/>
    <property type="project" value="UniProtKB-UniRule"/>
</dbReference>
<dbReference type="CDD" id="cd04738">
    <property type="entry name" value="DHOD_2_like"/>
    <property type="match status" value="1"/>
</dbReference>
<dbReference type="FunFam" id="3.20.20.70:FF:000028">
    <property type="entry name" value="Dihydroorotate dehydrogenase (quinone)"/>
    <property type="match status" value="1"/>
</dbReference>
<dbReference type="Gene3D" id="3.20.20.70">
    <property type="entry name" value="Aldolase class I"/>
    <property type="match status" value="1"/>
</dbReference>
<dbReference type="HAMAP" id="MF_00225">
    <property type="entry name" value="DHO_dh_type2"/>
    <property type="match status" value="1"/>
</dbReference>
<dbReference type="InterPro" id="IPR013785">
    <property type="entry name" value="Aldolase_TIM"/>
</dbReference>
<dbReference type="InterPro" id="IPR050074">
    <property type="entry name" value="DHO_dehydrogenase"/>
</dbReference>
<dbReference type="InterPro" id="IPR012135">
    <property type="entry name" value="Dihydroorotate_DH_1_2"/>
</dbReference>
<dbReference type="InterPro" id="IPR005719">
    <property type="entry name" value="Dihydroorotate_DH_2"/>
</dbReference>
<dbReference type="InterPro" id="IPR005720">
    <property type="entry name" value="Dihydroorotate_DH_cat"/>
</dbReference>
<dbReference type="InterPro" id="IPR001295">
    <property type="entry name" value="Dihydroorotate_DH_CS"/>
</dbReference>
<dbReference type="NCBIfam" id="NF003644">
    <property type="entry name" value="PRK05286.1-1"/>
    <property type="match status" value="1"/>
</dbReference>
<dbReference type="NCBIfam" id="NF003645">
    <property type="entry name" value="PRK05286.1-2"/>
    <property type="match status" value="1"/>
</dbReference>
<dbReference type="NCBIfam" id="NF003646">
    <property type="entry name" value="PRK05286.1-4"/>
    <property type="match status" value="1"/>
</dbReference>
<dbReference type="NCBIfam" id="NF003652">
    <property type="entry name" value="PRK05286.2-5"/>
    <property type="match status" value="1"/>
</dbReference>
<dbReference type="NCBIfam" id="TIGR01036">
    <property type="entry name" value="pyrD_sub2"/>
    <property type="match status" value="1"/>
</dbReference>
<dbReference type="PANTHER" id="PTHR48109:SF4">
    <property type="entry name" value="DIHYDROOROTATE DEHYDROGENASE (QUINONE), MITOCHONDRIAL"/>
    <property type="match status" value="1"/>
</dbReference>
<dbReference type="PANTHER" id="PTHR48109">
    <property type="entry name" value="DIHYDROOROTATE DEHYDROGENASE (QUINONE), MITOCHONDRIAL-RELATED"/>
    <property type="match status" value="1"/>
</dbReference>
<dbReference type="Pfam" id="PF01180">
    <property type="entry name" value="DHO_dh"/>
    <property type="match status" value="1"/>
</dbReference>
<dbReference type="PIRSF" id="PIRSF000164">
    <property type="entry name" value="DHO_oxidase"/>
    <property type="match status" value="1"/>
</dbReference>
<dbReference type="SUPFAM" id="SSF51395">
    <property type="entry name" value="FMN-linked oxidoreductases"/>
    <property type="match status" value="1"/>
</dbReference>
<dbReference type="PROSITE" id="PS00911">
    <property type="entry name" value="DHODEHASE_1"/>
    <property type="match status" value="1"/>
</dbReference>
<evidence type="ECO:0000255" key="1">
    <source>
        <dbReference type="HAMAP-Rule" id="MF_00225"/>
    </source>
</evidence>
<accession>Q9JX66</accession>
<accession>A1INQ9</accession>